<proteinExistence type="inferred from homology"/>
<evidence type="ECO:0000255" key="1">
    <source>
        <dbReference type="HAMAP-Rule" id="MF_01959"/>
    </source>
</evidence>
<feature type="chain" id="PRO_1000189055" description="Cytochrome c-type biogenesis protein CcmE">
    <location>
        <begin position="1"/>
        <end position="153"/>
    </location>
</feature>
<feature type="topological domain" description="Cytoplasmic" evidence="1">
    <location>
        <begin position="1"/>
        <end position="8"/>
    </location>
</feature>
<feature type="transmembrane region" description="Helical; Signal-anchor for type II membrane protein" evidence="1">
    <location>
        <begin position="9"/>
        <end position="29"/>
    </location>
</feature>
<feature type="topological domain" description="Extracellular" evidence="1">
    <location>
        <begin position="30"/>
        <end position="153"/>
    </location>
</feature>
<feature type="binding site" description="covalent" evidence="1">
    <location>
        <position position="123"/>
    </location>
    <ligand>
        <name>heme</name>
        <dbReference type="ChEBI" id="CHEBI:30413"/>
    </ligand>
</feature>
<feature type="binding site" description="axial binding residue" evidence="1">
    <location>
        <position position="127"/>
    </location>
    <ligand>
        <name>heme</name>
        <dbReference type="ChEBI" id="CHEBI:30413"/>
    </ligand>
    <ligandPart>
        <name>Fe</name>
        <dbReference type="ChEBI" id="CHEBI:18248"/>
    </ligandPart>
</feature>
<accession>B2FMB6</accession>
<dbReference type="EMBL" id="AM743169">
    <property type="protein sequence ID" value="CAQ46711.1"/>
    <property type="molecule type" value="Genomic_DNA"/>
</dbReference>
<dbReference type="RefSeq" id="WP_005410343.1">
    <property type="nucleotide sequence ID" value="NC_010943.1"/>
</dbReference>
<dbReference type="SMR" id="B2FMB6"/>
<dbReference type="EnsemblBacteria" id="CAQ46711">
    <property type="protein sequence ID" value="CAQ46711"/>
    <property type="gene ID" value="Smlt3272"/>
</dbReference>
<dbReference type="KEGG" id="sml:Smlt3272"/>
<dbReference type="eggNOG" id="COG2332">
    <property type="taxonomic scope" value="Bacteria"/>
</dbReference>
<dbReference type="HOGENOM" id="CLU_079503_1_1_6"/>
<dbReference type="Proteomes" id="UP000008840">
    <property type="component" value="Chromosome"/>
</dbReference>
<dbReference type="GO" id="GO:0005886">
    <property type="term" value="C:plasma membrane"/>
    <property type="evidence" value="ECO:0007669"/>
    <property type="project" value="UniProtKB-SubCell"/>
</dbReference>
<dbReference type="GO" id="GO:0020037">
    <property type="term" value="F:heme binding"/>
    <property type="evidence" value="ECO:0007669"/>
    <property type="project" value="InterPro"/>
</dbReference>
<dbReference type="GO" id="GO:0046872">
    <property type="term" value="F:metal ion binding"/>
    <property type="evidence" value="ECO:0007669"/>
    <property type="project" value="UniProtKB-KW"/>
</dbReference>
<dbReference type="GO" id="GO:0017004">
    <property type="term" value="P:cytochrome complex assembly"/>
    <property type="evidence" value="ECO:0007669"/>
    <property type="project" value="UniProtKB-KW"/>
</dbReference>
<dbReference type="Gene3D" id="2.40.50.140">
    <property type="entry name" value="Nucleic acid-binding proteins"/>
    <property type="match status" value="1"/>
</dbReference>
<dbReference type="HAMAP" id="MF_01959">
    <property type="entry name" value="CcmE"/>
    <property type="match status" value="1"/>
</dbReference>
<dbReference type="InterPro" id="IPR004329">
    <property type="entry name" value="CcmE"/>
</dbReference>
<dbReference type="InterPro" id="IPR036127">
    <property type="entry name" value="CcmE-like_sf"/>
</dbReference>
<dbReference type="InterPro" id="IPR012340">
    <property type="entry name" value="NA-bd_OB-fold"/>
</dbReference>
<dbReference type="NCBIfam" id="NF009727">
    <property type="entry name" value="PRK13254.1-1"/>
    <property type="match status" value="1"/>
</dbReference>
<dbReference type="NCBIfam" id="NF009728">
    <property type="entry name" value="PRK13254.1-2"/>
    <property type="match status" value="1"/>
</dbReference>
<dbReference type="PANTHER" id="PTHR34128">
    <property type="entry name" value="CYTOCHROME C-TYPE BIOGENESIS PROTEIN CCME HOMOLOG, MITOCHONDRIAL"/>
    <property type="match status" value="1"/>
</dbReference>
<dbReference type="PANTHER" id="PTHR34128:SF2">
    <property type="entry name" value="CYTOCHROME C-TYPE BIOGENESIS PROTEIN CCME HOMOLOG, MITOCHONDRIAL"/>
    <property type="match status" value="1"/>
</dbReference>
<dbReference type="Pfam" id="PF03100">
    <property type="entry name" value="CcmE"/>
    <property type="match status" value="1"/>
</dbReference>
<dbReference type="SUPFAM" id="SSF82093">
    <property type="entry name" value="Heme chaperone CcmE"/>
    <property type="match status" value="1"/>
</dbReference>
<keyword id="KW-1003">Cell membrane</keyword>
<keyword id="KW-0201">Cytochrome c-type biogenesis</keyword>
<keyword id="KW-0349">Heme</keyword>
<keyword id="KW-0408">Iron</keyword>
<keyword id="KW-0472">Membrane</keyword>
<keyword id="KW-0479">Metal-binding</keyword>
<keyword id="KW-1185">Reference proteome</keyword>
<keyword id="KW-0735">Signal-anchor</keyword>
<keyword id="KW-0812">Transmembrane</keyword>
<keyword id="KW-1133">Transmembrane helix</keyword>
<comment type="function">
    <text evidence="1">Heme chaperone required for the biogenesis of c-type cytochromes. Transiently binds heme delivered by CcmC and transfers the heme to apo-cytochromes in a process facilitated by CcmF and CcmH.</text>
</comment>
<comment type="subcellular location">
    <subcellularLocation>
        <location evidence="1">Cell membrane</location>
        <topology evidence="1">Single-pass type II membrane protein</topology>
    </subcellularLocation>
</comment>
<comment type="similarity">
    <text evidence="1">Belongs to the CcmE/CycJ family.</text>
</comment>
<organism>
    <name type="scientific">Stenotrophomonas maltophilia (strain K279a)</name>
    <dbReference type="NCBI Taxonomy" id="522373"/>
    <lineage>
        <taxon>Bacteria</taxon>
        <taxon>Pseudomonadati</taxon>
        <taxon>Pseudomonadota</taxon>
        <taxon>Gammaproteobacteria</taxon>
        <taxon>Lysobacterales</taxon>
        <taxon>Lysobacteraceae</taxon>
        <taxon>Stenotrophomonas</taxon>
        <taxon>Stenotrophomonas maltophilia group</taxon>
    </lineage>
</organism>
<sequence>MTPVQRRRLAWVLLALLASGLATALVAMALERNIAYLYTPSEVLRGDVDAQSRFRLGGMVVKGSFNRPVGSLEARFEVTDGDAQLAVTTSRILPDMFAEGTAVVASGRLQDGTFVADEVLAKHDEKYVPKEVADKMGDAHRKHDVPVTAPEVR</sequence>
<protein>
    <recommendedName>
        <fullName evidence="1">Cytochrome c-type biogenesis protein CcmE</fullName>
    </recommendedName>
    <alternativeName>
        <fullName evidence="1">Cytochrome c maturation protein E</fullName>
    </alternativeName>
    <alternativeName>
        <fullName evidence="1">Heme chaperone CcmE</fullName>
    </alternativeName>
</protein>
<reference key="1">
    <citation type="journal article" date="2008" name="Genome Biol.">
        <title>The complete genome, comparative and functional analysis of Stenotrophomonas maltophilia reveals an organism heavily shielded by drug resistance determinants.</title>
        <authorList>
            <person name="Crossman L.C."/>
            <person name="Gould V.C."/>
            <person name="Dow J.M."/>
            <person name="Vernikos G.S."/>
            <person name="Okazaki A."/>
            <person name="Sebaihia M."/>
            <person name="Saunders D."/>
            <person name="Arrowsmith C."/>
            <person name="Carver T."/>
            <person name="Peters N."/>
            <person name="Adlem E."/>
            <person name="Kerhornou A."/>
            <person name="Lord A."/>
            <person name="Murphy L."/>
            <person name="Seeger K."/>
            <person name="Squares R."/>
            <person name="Rutter S."/>
            <person name="Quail M.A."/>
            <person name="Rajandream M.A."/>
            <person name="Harris D."/>
            <person name="Churcher C."/>
            <person name="Bentley S.D."/>
            <person name="Parkhill J."/>
            <person name="Thomson N.R."/>
            <person name="Avison M.B."/>
        </authorList>
    </citation>
    <scope>NUCLEOTIDE SEQUENCE [LARGE SCALE GENOMIC DNA]</scope>
    <source>
        <strain>K279a</strain>
    </source>
</reference>
<gene>
    <name evidence="1" type="primary">ccmE</name>
    <name evidence="1" type="synonym">cycJ</name>
    <name type="ordered locus">Smlt3272</name>
</gene>
<name>CCME_STRMK</name>